<comment type="function">
    <text evidence="1 2 3 5 7">Together with cyp51A and cyp51B, encodes the sterol 14alpha-demethylase that plays a critical role in the third module of ergosterol biosynthesis pathway, being ergosterol the major sterol component in fungal membranes that participates in a variety of functions (PubMed:20955812). Cyp51C does not seem to encode an active sterol 14-alpha-demethylase, but can impact indirectly on sterol 14alpha-demethylation, and is required for full virulence on host wheat ears, but not on Arabidopsis floral tissue or the fruits of apple and tomato (PubMed:20955812, PubMed:23442154). The third module or late pathway involves the ergosterol synthesis itself through consecutive reactions that mainly occur in the endoplasmic reticulum (ER) membrane (By similarity). In filamentous fungi, during the initial step of this module, lanosterol (lanosta-8,24-dien-3beta-ol) can be metabolized to eburicol (By similarity). Sterol 14alpha-demethylase catalyzes the three-step oxidative removal of the 14alpha-methyl group (C-32) of both these sterols in the form of formate, and converts eburicol and lanosterol to 14-demethyleburicol (4,4,24-trimethylergosta-8,14,24(28)-trienol) and 4,4-dimethyl-5alpha-cholesta-8,14,24-trien-3beta-ol, respectively, which are further metabolized by other enzymes in the pathway to ergosterol (By similarity).</text>
</comment>
<comment type="cofactor">
    <cofactor evidence="2">
        <name>heme</name>
        <dbReference type="ChEBI" id="CHEBI:30413"/>
    </cofactor>
</comment>
<comment type="pathway">
    <text evidence="12">Steroid metabolism; ergosterol biosynthesis.</text>
</comment>
<comment type="subcellular location">
    <subcellularLocation>
        <location evidence="11">Endoplasmic reticulum membrane</location>
        <topology evidence="4">Single-pass membrane protein</topology>
    </subcellularLocation>
</comment>
<comment type="induction">
    <text evidence="6">Expression is increased in the absence of the C-24(28) sterol reductase ERG4.</text>
</comment>
<comment type="disruption phenotype">
    <text evidence="5 7 8">Decreases the amounts of 4,4-dimethylergosta-8,14,24(28)-trienol, the product of the Fusarium sterol 14-alpha demethylases (PubMed:23442154). Leads to reduced ability to produce conidia (PubMed:20955812). Results in increased sensitivity to tebuconazole, diniconazole, difenoconazole, flutriafol and prochloraz, but not to triadimefon and propiconazole (PubMed:20955812). Affects ergosterol production in the presence of ebuconazole or triadimefon (PubMed:20955812). Reduces virulence on host wheat ears (PubMed:23442154). Host-induced gene silencing of the 3 genes encoding sterol C14-alpha-demethylase leads to strong resistance of host to Fusarium species (PubMed:24218613).</text>
</comment>
<comment type="miscellaneous">
    <text evidence="7">In Fusarium, the biosynthesis pathway of the sterol precursors leading to the prevalent sterol ergosterol differs from yeast. The ringsystem of lanosterol in S.cerevisiae is firstly demethylised in three enzymatic steps leading to the intermediate zymosterol and secondly a methyl group is added to zymosterol by the sterol 24-C-methyltransferase to form fecosterol. In Fusarium, lanosterol is firstly transmethylated by the sterol 24-C-methyltransferase leading to the intermediate eburicol and secondly demethylated in three steps to form fecosterol.</text>
</comment>
<comment type="similarity">
    <text evidence="11">Belongs to the cytochrome P450 family.</text>
</comment>
<name>CP51C_GIBZE</name>
<evidence type="ECO:0000250" key="1">
    <source>
        <dbReference type="UniProtKB" id="P10613"/>
    </source>
</evidence>
<evidence type="ECO:0000250" key="2">
    <source>
        <dbReference type="UniProtKB" id="P10614"/>
    </source>
</evidence>
<evidence type="ECO:0000250" key="3">
    <source>
        <dbReference type="UniProtKB" id="Q4WNT5"/>
    </source>
</evidence>
<evidence type="ECO:0000255" key="4"/>
<evidence type="ECO:0000269" key="5">
    <source>
    </source>
</evidence>
<evidence type="ECO:0000269" key="6">
    <source>
    </source>
</evidence>
<evidence type="ECO:0000269" key="7">
    <source>
    </source>
</evidence>
<evidence type="ECO:0000269" key="8">
    <source>
    </source>
</evidence>
<evidence type="ECO:0000303" key="9">
    <source>
    </source>
</evidence>
<evidence type="ECO:0000303" key="10">
    <source>
    </source>
</evidence>
<evidence type="ECO:0000305" key="11"/>
<evidence type="ECO:0000305" key="12">
    <source>
    </source>
</evidence>
<feature type="chain" id="PRO_0000454357" description="Sterol 14-alpha demethylase CYP51C">
    <location>
        <begin position="1"/>
        <end position="517"/>
    </location>
</feature>
<feature type="transmembrane region" description="Helical" evidence="4">
    <location>
        <begin position="10"/>
        <end position="30"/>
    </location>
</feature>
<feature type="binding site" evidence="2">
    <location>
        <position position="115"/>
    </location>
    <ligand>
        <name>lanosterol</name>
        <dbReference type="ChEBI" id="CHEBI:16521"/>
    </ligand>
</feature>
<feature type="binding site" evidence="2">
    <location>
        <position position="300"/>
    </location>
    <ligand>
        <name>itraconazole</name>
        <dbReference type="ChEBI" id="CHEBI:6076"/>
    </ligand>
</feature>
<feature type="binding site" description="axial binding residue" evidence="2">
    <location>
        <position position="458"/>
    </location>
    <ligand>
        <name>heme</name>
        <dbReference type="ChEBI" id="CHEBI:30413"/>
    </ligand>
    <ligandPart>
        <name>Fe</name>
        <dbReference type="ChEBI" id="CHEBI:18248"/>
    </ligandPart>
</feature>
<protein>
    <recommendedName>
        <fullName evidence="9">Sterol 14-alpha demethylase CYP51C</fullName>
        <shortName evidence="9 10">CYP51C</shortName>
    </recommendedName>
    <alternativeName>
        <fullName evidence="9">Ergosterol biosynthetic protein CYP51C</fullName>
    </alternativeName>
</protein>
<reference key="1">
    <citation type="journal article" date="2007" name="Science">
        <title>The Fusarium graminearum genome reveals a link between localized polymorphism and pathogen specialization.</title>
        <authorList>
            <person name="Cuomo C.A."/>
            <person name="Gueldener U."/>
            <person name="Xu J.-R."/>
            <person name="Trail F."/>
            <person name="Turgeon B.G."/>
            <person name="Di Pietro A."/>
            <person name="Walton J.D."/>
            <person name="Ma L.-J."/>
            <person name="Baker S.E."/>
            <person name="Rep M."/>
            <person name="Adam G."/>
            <person name="Antoniw J."/>
            <person name="Baldwin T."/>
            <person name="Calvo S.E."/>
            <person name="Chang Y.-L."/>
            <person name="DeCaprio D."/>
            <person name="Gale L.R."/>
            <person name="Gnerre S."/>
            <person name="Goswami R.S."/>
            <person name="Hammond-Kosack K."/>
            <person name="Harris L.J."/>
            <person name="Hilburn K."/>
            <person name="Kennell J.C."/>
            <person name="Kroken S."/>
            <person name="Magnuson J.K."/>
            <person name="Mannhaupt G."/>
            <person name="Mauceli E.W."/>
            <person name="Mewes H.-W."/>
            <person name="Mitterbauer R."/>
            <person name="Muehlbauer G."/>
            <person name="Muensterkoetter M."/>
            <person name="Nelson D."/>
            <person name="O'Donnell K."/>
            <person name="Ouellet T."/>
            <person name="Qi W."/>
            <person name="Quesneville H."/>
            <person name="Roncero M.I.G."/>
            <person name="Seong K.-Y."/>
            <person name="Tetko I.V."/>
            <person name="Urban M."/>
            <person name="Waalwijk C."/>
            <person name="Ward T.J."/>
            <person name="Yao J."/>
            <person name="Birren B.W."/>
            <person name="Kistler H.C."/>
        </authorList>
    </citation>
    <scope>NUCLEOTIDE SEQUENCE [LARGE SCALE GENOMIC DNA]</scope>
    <source>
        <strain>ATCC MYA-4620 / CBS 123657 / FGSC 9075 / NRRL 31084 / PH-1</strain>
    </source>
</reference>
<reference key="2">
    <citation type="journal article" date="2010" name="Nature">
        <title>Comparative genomics reveals mobile pathogenicity chromosomes in Fusarium.</title>
        <authorList>
            <person name="Ma L.-J."/>
            <person name="van der Does H.C."/>
            <person name="Borkovich K.A."/>
            <person name="Coleman J.J."/>
            <person name="Daboussi M.-J."/>
            <person name="Di Pietro A."/>
            <person name="Dufresne M."/>
            <person name="Freitag M."/>
            <person name="Grabherr M."/>
            <person name="Henrissat B."/>
            <person name="Houterman P.M."/>
            <person name="Kang S."/>
            <person name="Shim W.-B."/>
            <person name="Woloshuk C."/>
            <person name="Xie X."/>
            <person name="Xu J.-R."/>
            <person name="Antoniw J."/>
            <person name="Baker S.E."/>
            <person name="Bluhm B.H."/>
            <person name="Breakspear A."/>
            <person name="Brown D.W."/>
            <person name="Butchko R.A.E."/>
            <person name="Chapman S."/>
            <person name="Coulson R."/>
            <person name="Coutinho P.M."/>
            <person name="Danchin E.G.J."/>
            <person name="Diener A."/>
            <person name="Gale L.R."/>
            <person name="Gardiner D.M."/>
            <person name="Goff S."/>
            <person name="Hammond-Kosack K.E."/>
            <person name="Hilburn K."/>
            <person name="Hua-Van A."/>
            <person name="Jonkers W."/>
            <person name="Kazan K."/>
            <person name="Kodira C.D."/>
            <person name="Koehrsen M."/>
            <person name="Kumar L."/>
            <person name="Lee Y.-H."/>
            <person name="Li L."/>
            <person name="Manners J.M."/>
            <person name="Miranda-Saavedra D."/>
            <person name="Mukherjee M."/>
            <person name="Park G."/>
            <person name="Park J."/>
            <person name="Park S.-Y."/>
            <person name="Proctor R.H."/>
            <person name="Regev A."/>
            <person name="Ruiz-Roldan M.C."/>
            <person name="Sain D."/>
            <person name="Sakthikumar S."/>
            <person name="Sykes S."/>
            <person name="Schwartz D.C."/>
            <person name="Turgeon B.G."/>
            <person name="Wapinski I."/>
            <person name="Yoder O."/>
            <person name="Young S."/>
            <person name="Zeng Q."/>
            <person name="Zhou S."/>
            <person name="Galagan J."/>
            <person name="Cuomo C.A."/>
            <person name="Kistler H.C."/>
            <person name="Rep M."/>
        </authorList>
    </citation>
    <scope>GENOME REANNOTATION</scope>
    <source>
        <strain>ATCC MYA-4620 / CBS 123657 / FGSC 9075 / NRRL 31084 / PH-1</strain>
    </source>
</reference>
<reference key="3">
    <citation type="journal article" date="2015" name="BMC Genomics">
        <title>The completed genome sequence of the pathogenic ascomycete fungus Fusarium graminearum.</title>
        <authorList>
            <person name="King R."/>
            <person name="Urban M."/>
            <person name="Hammond-Kosack M.C.U."/>
            <person name="Hassani-Pak K."/>
            <person name="Hammond-Kosack K.E."/>
        </authorList>
    </citation>
    <scope>NUCLEOTIDE SEQUENCE [LARGE SCALE GENOMIC DNA]</scope>
    <source>
        <strain>ATCC MYA-4620 / CBS 123657 / FGSC 9075 / NRRL 31084 / PH-1</strain>
    </source>
</reference>
<reference key="4">
    <citation type="journal article" date="2011" name="Fungal Genet. Biol.">
        <title>Paralogous cyp51 genes in Fusarium graminearum mediate differential sensitivity to sterol demethylation inhibitors.</title>
        <authorList>
            <person name="Liu X."/>
            <person name="Yu F."/>
            <person name="Schnabel G."/>
            <person name="Wu J."/>
            <person name="Wang Z."/>
            <person name="Ma Z."/>
        </authorList>
    </citation>
    <scope>FUNCTION</scope>
    <scope>DISRUPTION PHENOTYPE</scope>
</reference>
<reference key="5">
    <citation type="journal article" date="2013" name="Mol. Plant Pathol.">
        <title>Involvement of FgERG4 in ergosterol biosynthesis, vegetative differentiation and virulence in Fusarium graminearum.</title>
        <authorList>
            <person name="Liu X."/>
            <person name="Jiang J."/>
            <person name="Yin Y."/>
            <person name="Ma Z."/>
        </authorList>
    </citation>
    <scope>INDUCTION</scope>
</reference>
<reference key="6">
    <citation type="journal article" date="2013" name="New Phytol.">
        <title>Characterization of the sterol 14alpha-demethylases of Fusarium graminearum identifies a novel genus-specific CYP51 function.</title>
        <authorList>
            <person name="Fan J."/>
            <person name="Urban M."/>
            <person name="Parker J.E."/>
            <person name="Brewer H.C."/>
            <person name="Kelly S.L."/>
            <person name="Hammond-Kosack K.E."/>
            <person name="Fraaije B.A."/>
            <person name="Liu X."/>
            <person name="Cools H.J."/>
        </authorList>
    </citation>
    <scope>FUNCTION</scope>
    <scope>DISRUPTION PHENOTYPE</scope>
    <scope>PATHWAY</scope>
</reference>
<reference key="7">
    <citation type="journal article" date="2013" name="Proc. Natl. Acad. Sci. U.S.A.">
        <title>Host-induced gene silencing of cytochrome P450 lanosterol C14alpha-demethylase-encoding genes confers strong resistance to Fusarium species.</title>
        <authorList>
            <person name="Koch A."/>
            <person name="Kumar N."/>
            <person name="Weber L."/>
            <person name="Keller H."/>
            <person name="Imani J."/>
            <person name="Kogel K.H."/>
        </authorList>
    </citation>
    <scope>DISRUPTION PHENOTYPE</scope>
</reference>
<sequence>MESLYETLRTLPLSVSIPLTTSIIIILSIVTNVVKQLWFPNPHRPPVVFHIFPFIGSTVQYGIDPYAFFFDCRDKYGDCFTFILLGKSTTVFLGPKGNDFILNGKHADLNAEDVYGKLTTPVFGEEVVYDCSNARFMDQKRLLKLGLTTDSLRCYIPKFVKEVEDYVKNSPYFKGDTGIVNITEVMAEITIYTASGSLLGNEVRSMFDSTFATLYRHLDDGFQPINFVMPGLPLPQNFRRNHARKVMEKLFSDIISKRRETGNQGDETDMIWMLMNAQYKDGEPLPDHHAARMLIAILMGGQHNTAVSGAWLLLNLAHKPHLVQELYEEQTQVLGSPQEPLTWENLQKLTLNGQVIKETLRLHSPIHSILRQVKSPMRVPGTEWVVPPSHTLLSSPGTMARSEEFFPRPSEWDPHRWDKIEPLVKTAEDGQTVDYGFGVMSKSVSSPYLPFGAGRHRCVGENYAYAQLGAIVATFIRLVHIEQPDPKAPLPAPDYSSMFSRPMNPAEIRWRRRETVE</sequence>
<organism>
    <name type="scientific">Gibberella zeae (strain ATCC MYA-4620 / CBS 123657 / FGSC 9075 / NRRL 31084 / PH-1)</name>
    <name type="common">Wheat head blight fungus</name>
    <name type="synonym">Fusarium graminearum</name>
    <dbReference type="NCBI Taxonomy" id="229533"/>
    <lineage>
        <taxon>Eukaryota</taxon>
        <taxon>Fungi</taxon>
        <taxon>Dikarya</taxon>
        <taxon>Ascomycota</taxon>
        <taxon>Pezizomycotina</taxon>
        <taxon>Sordariomycetes</taxon>
        <taxon>Hypocreomycetidae</taxon>
        <taxon>Hypocreales</taxon>
        <taxon>Nectriaceae</taxon>
        <taxon>Fusarium</taxon>
    </lineage>
</organism>
<dbReference type="EMBL" id="HG970334">
    <property type="protein sequence ID" value="CEF88203.1"/>
    <property type="molecule type" value="Genomic_DNA"/>
</dbReference>
<dbReference type="RefSeq" id="XP_011325340.1">
    <property type="nucleotide sequence ID" value="XM_011327038.1"/>
</dbReference>
<dbReference type="SMR" id="I1S2M5"/>
<dbReference type="FunCoup" id="I1S2M5">
    <property type="interactions" value="571"/>
</dbReference>
<dbReference type="STRING" id="229533.I1S2M5"/>
<dbReference type="KEGG" id="fgr:FGSG_11024"/>
<dbReference type="VEuPathDB" id="FungiDB:FGRAMPH1_01G21047"/>
<dbReference type="eggNOG" id="KOG0684">
    <property type="taxonomic scope" value="Eukaryota"/>
</dbReference>
<dbReference type="HOGENOM" id="CLU_001570_15_0_1"/>
<dbReference type="InParanoid" id="I1S2M5"/>
<dbReference type="OrthoDB" id="10497at110618"/>
<dbReference type="UniPathway" id="UPA00768"/>
<dbReference type="PHI-base" id="PHI:2909"/>
<dbReference type="Proteomes" id="UP000070720">
    <property type="component" value="Chromosome 3"/>
</dbReference>
<dbReference type="GO" id="GO:0005789">
    <property type="term" value="C:endoplasmic reticulum membrane"/>
    <property type="evidence" value="ECO:0007669"/>
    <property type="project" value="UniProtKB-SubCell"/>
</dbReference>
<dbReference type="GO" id="GO:0020037">
    <property type="term" value="F:heme binding"/>
    <property type="evidence" value="ECO:0007669"/>
    <property type="project" value="InterPro"/>
</dbReference>
<dbReference type="GO" id="GO:0005506">
    <property type="term" value="F:iron ion binding"/>
    <property type="evidence" value="ECO:0007669"/>
    <property type="project" value="InterPro"/>
</dbReference>
<dbReference type="GO" id="GO:0004497">
    <property type="term" value="F:monooxygenase activity"/>
    <property type="evidence" value="ECO:0007669"/>
    <property type="project" value="UniProtKB-KW"/>
</dbReference>
<dbReference type="GO" id="GO:0016705">
    <property type="term" value="F:oxidoreductase activity, acting on paired donors, with incorporation or reduction of molecular oxygen"/>
    <property type="evidence" value="ECO:0007669"/>
    <property type="project" value="InterPro"/>
</dbReference>
<dbReference type="GO" id="GO:0016126">
    <property type="term" value="P:sterol biosynthetic process"/>
    <property type="evidence" value="ECO:0007669"/>
    <property type="project" value="UniProtKB-UniPathway"/>
</dbReference>
<dbReference type="CDD" id="cd11042">
    <property type="entry name" value="CYP51-like"/>
    <property type="match status" value="1"/>
</dbReference>
<dbReference type="FunFam" id="1.10.630.10:FF:000033">
    <property type="entry name" value="14-alpha sterol demethylase"/>
    <property type="match status" value="1"/>
</dbReference>
<dbReference type="Gene3D" id="1.10.630.10">
    <property type="entry name" value="Cytochrome P450"/>
    <property type="match status" value="1"/>
</dbReference>
<dbReference type="InterPro" id="IPR050529">
    <property type="entry name" value="CYP450_sterol_14alpha_dmase"/>
</dbReference>
<dbReference type="InterPro" id="IPR001128">
    <property type="entry name" value="Cyt_P450"/>
</dbReference>
<dbReference type="InterPro" id="IPR017972">
    <property type="entry name" value="Cyt_P450_CS"/>
</dbReference>
<dbReference type="InterPro" id="IPR002403">
    <property type="entry name" value="Cyt_P450_E_grp-IV"/>
</dbReference>
<dbReference type="InterPro" id="IPR036396">
    <property type="entry name" value="Cyt_P450_sf"/>
</dbReference>
<dbReference type="PANTHER" id="PTHR24304:SF2">
    <property type="entry name" value="24-HYDROXYCHOLESTEROL 7-ALPHA-HYDROXYLASE"/>
    <property type="match status" value="1"/>
</dbReference>
<dbReference type="PANTHER" id="PTHR24304">
    <property type="entry name" value="CYTOCHROME P450 FAMILY 7"/>
    <property type="match status" value="1"/>
</dbReference>
<dbReference type="Pfam" id="PF00067">
    <property type="entry name" value="p450"/>
    <property type="match status" value="1"/>
</dbReference>
<dbReference type="PRINTS" id="PR00465">
    <property type="entry name" value="EP450IV"/>
</dbReference>
<dbReference type="PRINTS" id="PR00385">
    <property type="entry name" value="P450"/>
</dbReference>
<dbReference type="SUPFAM" id="SSF48264">
    <property type="entry name" value="Cytochrome P450"/>
    <property type="match status" value="1"/>
</dbReference>
<dbReference type="PROSITE" id="PS00086">
    <property type="entry name" value="CYTOCHROME_P450"/>
    <property type="match status" value="1"/>
</dbReference>
<keyword id="KW-0256">Endoplasmic reticulum</keyword>
<keyword id="KW-0349">Heme</keyword>
<keyword id="KW-0408">Iron</keyword>
<keyword id="KW-0472">Membrane</keyword>
<keyword id="KW-0479">Metal-binding</keyword>
<keyword id="KW-0503">Monooxygenase</keyword>
<keyword id="KW-0560">Oxidoreductase</keyword>
<keyword id="KW-1185">Reference proteome</keyword>
<keyword id="KW-0812">Transmembrane</keyword>
<keyword id="KW-1133">Transmembrane helix</keyword>
<accession>I1S2M5</accession>
<accession>A0A098E4S1</accession>
<gene>
    <name evidence="9" type="primary">CYP51C</name>
    <name type="ORF">FG11024</name>
    <name type="ORF">FGRAMPH1_01T21047</name>
</gene>
<proteinExistence type="evidence at transcript level"/>